<name>LEPA_BACCR</name>
<sequence>MNKEERAKRQSKIRNFSIIAHIDHGKSTLADRILEKTNALTQREMKAQLLDSMDLERERGITIKLNAVQLNYKAKDGEEYILHLIDTPGHVDFTYEVSRSLAACEGAILVVDAAQGIEAQTLANVYLALDNNLEILPVINKIDLPSADPERVRQEVEDVIGLDASEAVLASAKAGIGIEEILEQIVEKVPAPAGDSEEPLQCMIFDSLYDPYRGVIAYIRVVNGTVKVGDKVRMMATGKEFEVTEVGVFTPKTTQRDELTVGDVGFLAASIKNVGDTRVGDTITHAKRPAAEPLAGYRKLNPMVFCGLYPIDSARYNDLRDALEKLELNDSALEFEPETSQALGFGFRCGFLGLLHMEIIQERIEREFKIDLITTAPSVIYKVYLTNGEDVIVDNPSNMPDPQSIDRVEEPFVKASIMVPNDYVGAVMEICQGKRGTFIDMQYLDETRVTLTYEIPLSEIVYDFFDQLKSNTKGYASFDYELIGYKPSKLVKMDILLNNEQVDALSFIVHRDSAYDRGKVIVEKLKELIPRQQFEVPIQATIGNKVVARSTIKAMRKNVLAKCYGGDISRKRKLLDKQKESKKRMKSVGSVEVPQEAFMAVLKMDDN</sequence>
<evidence type="ECO:0000255" key="1">
    <source>
        <dbReference type="HAMAP-Rule" id="MF_00071"/>
    </source>
</evidence>
<accession>Q818E4</accession>
<proteinExistence type="inferred from homology"/>
<dbReference type="EC" id="3.6.5.n1" evidence="1"/>
<dbReference type="EMBL" id="AE016877">
    <property type="protein sequence ID" value="AAP11230.1"/>
    <property type="molecule type" value="Genomic_DNA"/>
</dbReference>
<dbReference type="RefSeq" id="NP_834029.1">
    <property type="nucleotide sequence ID" value="NC_004722.1"/>
</dbReference>
<dbReference type="RefSeq" id="WP_001030950.1">
    <property type="nucleotide sequence ID" value="NC_004722.1"/>
</dbReference>
<dbReference type="SMR" id="Q818E4"/>
<dbReference type="STRING" id="226900.BC_4317"/>
<dbReference type="KEGG" id="bce:BC4317"/>
<dbReference type="PATRIC" id="fig|226900.8.peg.4464"/>
<dbReference type="HOGENOM" id="CLU_009995_3_3_9"/>
<dbReference type="Proteomes" id="UP000001417">
    <property type="component" value="Chromosome"/>
</dbReference>
<dbReference type="GO" id="GO:0005886">
    <property type="term" value="C:plasma membrane"/>
    <property type="evidence" value="ECO:0007669"/>
    <property type="project" value="UniProtKB-SubCell"/>
</dbReference>
<dbReference type="GO" id="GO:0005525">
    <property type="term" value="F:GTP binding"/>
    <property type="evidence" value="ECO:0007669"/>
    <property type="project" value="UniProtKB-UniRule"/>
</dbReference>
<dbReference type="GO" id="GO:0003924">
    <property type="term" value="F:GTPase activity"/>
    <property type="evidence" value="ECO:0007669"/>
    <property type="project" value="UniProtKB-UniRule"/>
</dbReference>
<dbReference type="GO" id="GO:0043022">
    <property type="term" value="F:ribosome binding"/>
    <property type="evidence" value="ECO:0000318"/>
    <property type="project" value="GO_Central"/>
</dbReference>
<dbReference type="GO" id="GO:0003746">
    <property type="term" value="F:translation elongation factor activity"/>
    <property type="evidence" value="ECO:0007669"/>
    <property type="project" value="UniProtKB-UniRule"/>
</dbReference>
<dbReference type="GO" id="GO:0045727">
    <property type="term" value="P:positive regulation of translation"/>
    <property type="evidence" value="ECO:0000318"/>
    <property type="project" value="GO_Central"/>
</dbReference>
<dbReference type="CDD" id="cd03699">
    <property type="entry name" value="EF4_II"/>
    <property type="match status" value="1"/>
</dbReference>
<dbReference type="CDD" id="cd16260">
    <property type="entry name" value="EF4_III"/>
    <property type="match status" value="1"/>
</dbReference>
<dbReference type="CDD" id="cd01890">
    <property type="entry name" value="LepA"/>
    <property type="match status" value="1"/>
</dbReference>
<dbReference type="CDD" id="cd03709">
    <property type="entry name" value="lepA_C"/>
    <property type="match status" value="1"/>
</dbReference>
<dbReference type="FunFam" id="3.40.50.300:FF:000078">
    <property type="entry name" value="Elongation factor 4"/>
    <property type="match status" value="1"/>
</dbReference>
<dbReference type="FunFam" id="2.40.30.10:FF:000015">
    <property type="entry name" value="Translation factor GUF1, mitochondrial"/>
    <property type="match status" value="1"/>
</dbReference>
<dbReference type="FunFam" id="3.30.70.240:FF:000007">
    <property type="entry name" value="Translation factor GUF1, mitochondrial"/>
    <property type="match status" value="1"/>
</dbReference>
<dbReference type="FunFam" id="3.30.70.2570:FF:000001">
    <property type="entry name" value="Translation factor GUF1, mitochondrial"/>
    <property type="match status" value="1"/>
</dbReference>
<dbReference type="FunFam" id="3.30.70.870:FF:000004">
    <property type="entry name" value="Translation factor GUF1, mitochondrial"/>
    <property type="match status" value="1"/>
</dbReference>
<dbReference type="Gene3D" id="3.30.70.240">
    <property type="match status" value="1"/>
</dbReference>
<dbReference type="Gene3D" id="3.30.70.2570">
    <property type="entry name" value="Elongation factor 4, C-terminal domain"/>
    <property type="match status" value="1"/>
</dbReference>
<dbReference type="Gene3D" id="3.30.70.870">
    <property type="entry name" value="Elongation Factor G (Translational Gtpase), domain 3"/>
    <property type="match status" value="1"/>
</dbReference>
<dbReference type="Gene3D" id="3.40.50.300">
    <property type="entry name" value="P-loop containing nucleotide triphosphate hydrolases"/>
    <property type="match status" value="1"/>
</dbReference>
<dbReference type="Gene3D" id="2.40.30.10">
    <property type="entry name" value="Translation factors"/>
    <property type="match status" value="1"/>
</dbReference>
<dbReference type="HAMAP" id="MF_00071">
    <property type="entry name" value="LepA"/>
    <property type="match status" value="1"/>
</dbReference>
<dbReference type="InterPro" id="IPR006297">
    <property type="entry name" value="EF-4"/>
</dbReference>
<dbReference type="InterPro" id="IPR035647">
    <property type="entry name" value="EFG_III/V"/>
</dbReference>
<dbReference type="InterPro" id="IPR000640">
    <property type="entry name" value="EFG_V-like"/>
</dbReference>
<dbReference type="InterPro" id="IPR004161">
    <property type="entry name" value="EFTu-like_2"/>
</dbReference>
<dbReference type="InterPro" id="IPR031157">
    <property type="entry name" value="G_TR_CS"/>
</dbReference>
<dbReference type="InterPro" id="IPR038363">
    <property type="entry name" value="LepA_C_sf"/>
</dbReference>
<dbReference type="InterPro" id="IPR013842">
    <property type="entry name" value="LepA_CTD"/>
</dbReference>
<dbReference type="InterPro" id="IPR035654">
    <property type="entry name" value="LepA_IV"/>
</dbReference>
<dbReference type="InterPro" id="IPR027417">
    <property type="entry name" value="P-loop_NTPase"/>
</dbReference>
<dbReference type="InterPro" id="IPR005225">
    <property type="entry name" value="Small_GTP-bd"/>
</dbReference>
<dbReference type="InterPro" id="IPR000795">
    <property type="entry name" value="T_Tr_GTP-bd_dom"/>
</dbReference>
<dbReference type="NCBIfam" id="TIGR01393">
    <property type="entry name" value="lepA"/>
    <property type="match status" value="1"/>
</dbReference>
<dbReference type="NCBIfam" id="TIGR00231">
    <property type="entry name" value="small_GTP"/>
    <property type="match status" value="1"/>
</dbReference>
<dbReference type="PANTHER" id="PTHR43512:SF4">
    <property type="entry name" value="TRANSLATION FACTOR GUF1 HOMOLOG, CHLOROPLASTIC"/>
    <property type="match status" value="1"/>
</dbReference>
<dbReference type="PANTHER" id="PTHR43512">
    <property type="entry name" value="TRANSLATION FACTOR GUF1-RELATED"/>
    <property type="match status" value="1"/>
</dbReference>
<dbReference type="Pfam" id="PF00679">
    <property type="entry name" value="EFG_C"/>
    <property type="match status" value="1"/>
</dbReference>
<dbReference type="Pfam" id="PF00009">
    <property type="entry name" value="GTP_EFTU"/>
    <property type="match status" value="1"/>
</dbReference>
<dbReference type="Pfam" id="PF03144">
    <property type="entry name" value="GTP_EFTU_D2"/>
    <property type="match status" value="1"/>
</dbReference>
<dbReference type="Pfam" id="PF06421">
    <property type="entry name" value="LepA_C"/>
    <property type="match status" value="1"/>
</dbReference>
<dbReference type="PRINTS" id="PR00315">
    <property type="entry name" value="ELONGATNFCT"/>
</dbReference>
<dbReference type="SMART" id="SM00838">
    <property type="entry name" value="EFG_C"/>
    <property type="match status" value="1"/>
</dbReference>
<dbReference type="SUPFAM" id="SSF54980">
    <property type="entry name" value="EF-G C-terminal domain-like"/>
    <property type="match status" value="2"/>
</dbReference>
<dbReference type="SUPFAM" id="SSF52540">
    <property type="entry name" value="P-loop containing nucleoside triphosphate hydrolases"/>
    <property type="match status" value="1"/>
</dbReference>
<dbReference type="PROSITE" id="PS00301">
    <property type="entry name" value="G_TR_1"/>
    <property type="match status" value="1"/>
</dbReference>
<dbReference type="PROSITE" id="PS51722">
    <property type="entry name" value="G_TR_2"/>
    <property type="match status" value="1"/>
</dbReference>
<feature type="chain" id="PRO_0000176226" description="Elongation factor 4">
    <location>
        <begin position="1"/>
        <end position="607"/>
    </location>
</feature>
<feature type="domain" description="tr-type G">
    <location>
        <begin position="11"/>
        <end position="193"/>
    </location>
</feature>
<feature type="binding site" evidence="1">
    <location>
        <begin position="23"/>
        <end position="28"/>
    </location>
    <ligand>
        <name>GTP</name>
        <dbReference type="ChEBI" id="CHEBI:37565"/>
    </ligand>
</feature>
<feature type="binding site" evidence="1">
    <location>
        <begin position="140"/>
        <end position="143"/>
    </location>
    <ligand>
        <name>GTP</name>
        <dbReference type="ChEBI" id="CHEBI:37565"/>
    </ligand>
</feature>
<comment type="function">
    <text evidence="1">Required for accurate and efficient protein synthesis under certain stress conditions. May act as a fidelity factor of the translation reaction, by catalyzing a one-codon backward translocation of tRNAs on improperly translocated ribosomes. Back-translocation proceeds from a post-translocation (POST) complex to a pre-translocation (PRE) complex, thus giving elongation factor G a second chance to translocate the tRNAs correctly. Binds to ribosomes in a GTP-dependent manner.</text>
</comment>
<comment type="catalytic activity">
    <reaction evidence="1">
        <text>GTP + H2O = GDP + phosphate + H(+)</text>
        <dbReference type="Rhea" id="RHEA:19669"/>
        <dbReference type="ChEBI" id="CHEBI:15377"/>
        <dbReference type="ChEBI" id="CHEBI:15378"/>
        <dbReference type="ChEBI" id="CHEBI:37565"/>
        <dbReference type="ChEBI" id="CHEBI:43474"/>
        <dbReference type="ChEBI" id="CHEBI:58189"/>
        <dbReference type="EC" id="3.6.5.n1"/>
    </reaction>
</comment>
<comment type="subcellular location">
    <subcellularLocation>
        <location evidence="1">Cell membrane</location>
        <topology evidence="1">Peripheral membrane protein</topology>
        <orientation evidence="1">Cytoplasmic side</orientation>
    </subcellularLocation>
</comment>
<comment type="similarity">
    <text evidence="1">Belongs to the TRAFAC class translation factor GTPase superfamily. Classic translation factor GTPase family. LepA subfamily.</text>
</comment>
<gene>
    <name evidence="1" type="primary">lepA</name>
    <name type="ordered locus">BC_4317</name>
</gene>
<protein>
    <recommendedName>
        <fullName evidence="1">Elongation factor 4</fullName>
        <shortName evidence="1">EF-4</shortName>
        <ecNumber evidence="1">3.6.5.n1</ecNumber>
    </recommendedName>
    <alternativeName>
        <fullName evidence="1">Ribosomal back-translocase LepA</fullName>
    </alternativeName>
</protein>
<reference key="1">
    <citation type="journal article" date="2003" name="Nature">
        <title>Genome sequence of Bacillus cereus and comparative analysis with Bacillus anthracis.</title>
        <authorList>
            <person name="Ivanova N."/>
            <person name="Sorokin A."/>
            <person name="Anderson I."/>
            <person name="Galleron N."/>
            <person name="Candelon B."/>
            <person name="Kapatral V."/>
            <person name="Bhattacharyya A."/>
            <person name="Reznik G."/>
            <person name="Mikhailova N."/>
            <person name="Lapidus A."/>
            <person name="Chu L."/>
            <person name="Mazur M."/>
            <person name="Goltsman E."/>
            <person name="Larsen N."/>
            <person name="D'Souza M."/>
            <person name="Walunas T."/>
            <person name="Grechkin Y."/>
            <person name="Pusch G."/>
            <person name="Haselkorn R."/>
            <person name="Fonstein M."/>
            <person name="Ehrlich S.D."/>
            <person name="Overbeek R."/>
            <person name="Kyrpides N.C."/>
        </authorList>
    </citation>
    <scope>NUCLEOTIDE SEQUENCE [LARGE SCALE GENOMIC DNA]</scope>
    <source>
        <strain>ATCC 14579 / DSM 31 / CCUG 7414 / JCM 2152 / NBRC 15305 / NCIMB 9373 / NCTC 2599 / NRRL B-3711</strain>
    </source>
</reference>
<keyword id="KW-1003">Cell membrane</keyword>
<keyword id="KW-0342">GTP-binding</keyword>
<keyword id="KW-0378">Hydrolase</keyword>
<keyword id="KW-0472">Membrane</keyword>
<keyword id="KW-0547">Nucleotide-binding</keyword>
<keyword id="KW-0648">Protein biosynthesis</keyword>
<keyword id="KW-1185">Reference proteome</keyword>
<organism>
    <name type="scientific">Bacillus cereus (strain ATCC 14579 / DSM 31 / CCUG 7414 / JCM 2152 / NBRC 15305 / NCIMB 9373 / NCTC 2599 / NRRL B-3711)</name>
    <dbReference type="NCBI Taxonomy" id="226900"/>
    <lineage>
        <taxon>Bacteria</taxon>
        <taxon>Bacillati</taxon>
        <taxon>Bacillota</taxon>
        <taxon>Bacilli</taxon>
        <taxon>Bacillales</taxon>
        <taxon>Bacillaceae</taxon>
        <taxon>Bacillus</taxon>
        <taxon>Bacillus cereus group</taxon>
    </lineage>
</organism>